<proteinExistence type="inferred from homology"/>
<organism>
    <name type="scientific">Stigmatella aurantiaca</name>
    <dbReference type="NCBI Taxonomy" id="41"/>
    <lineage>
        <taxon>Bacteria</taxon>
        <taxon>Pseudomonadati</taxon>
        <taxon>Myxococcota</taxon>
        <taxon>Myxococcia</taxon>
        <taxon>Myxococcales</taxon>
        <taxon>Cystobacterineae</taxon>
        <taxon>Archangiaceae</taxon>
        <taxon>Stigmatella</taxon>
    </lineage>
</organism>
<sequence>MAKEKFERNKPHVNIGTIGHVDHGKTSLTAAITKVLAKTGGATFLAYDQIDKAPEERERGITISTAHVEYQTKNRHYAHVDCPGHADYVKNMITGAAQMDGAILVVSAADGPMPQTREHILLARQVGVPYIVVFLNKVDMLDDPELRELVEMEVRDLLKKYEFPGDSIPIIPGSALKALEGDTSDIGEGAILKLMAAVDEYIPTPQRATDKPFLMPVEDVFSIAGRGTVATGRVERGKIKVGEEVEIVGIRPTQKTVITGVEMFRKLLDEGMAGDNIGALLRGLKREDLERGQVLANWGSINPHTKFKAQVYVLSKEEGGRHTPFFKGYRPQFYFRTTDVTGTVKLPDNVEMVMPGDNIAIEVELITPVAMEKELPFAIREGGRTVGAGVVADIIA</sequence>
<gene>
    <name evidence="2" type="primary">tuf</name>
    <name type="synonym">tufB</name>
</gene>
<keyword id="KW-0963">Cytoplasm</keyword>
<keyword id="KW-0251">Elongation factor</keyword>
<keyword id="KW-0342">GTP-binding</keyword>
<keyword id="KW-0378">Hydrolase</keyword>
<keyword id="KW-0460">Magnesium</keyword>
<keyword id="KW-0479">Metal-binding</keyword>
<keyword id="KW-0547">Nucleotide-binding</keyword>
<keyword id="KW-0648">Protein biosynthesis</keyword>
<name>EFTU_STIAU</name>
<comment type="function">
    <text evidence="2">GTP hydrolase that promotes the GTP-dependent binding of aminoacyl-tRNA to the A-site of ribosomes during protein biosynthesis.</text>
</comment>
<comment type="catalytic activity">
    <reaction evidence="2">
        <text>GTP + H2O = GDP + phosphate + H(+)</text>
        <dbReference type="Rhea" id="RHEA:19669"/>
        <dbReference type="ChEBI" id="CHEBI:15377"/>
        <dbReference type="ChEBI" id="CHEBI:15378"/>
        <dbReference type="ChEBI" id="CHEBI:37565"/>
        <dbReference type="ChEBI" id="CHEBI:43474"/>
        <dbReference type="ChEBI" id="CHEBI:58189"/>
        <dbReference type="EC" id="3.6.5.3"/>
    </reaction>
    <physiologicalReaction direction="left-to-right" evidence="2">
        <dbReference type="Rhea" id="RHEA:19670"/>
    </physiologicalReaction>
</comment>
<comment type="subunit">
    <text evidence="2">Monomer.</text>
</comment>
<comment type="subcellular location">
    <subcellularLocation>
        <location evidence="2">Cytoplasm</location>
    </subcellularLocation>
</comment>
<comment type="similarity">
    <text evidence="2">Belongs to the TRAFAC class translation factor GTPase superfamily. Classic translation factor GTPase family. EF-Tu/EF-1A subfamily.</text>
</comment>
<dbReference type="EC" id="3.6.5.3" evidence="2"/>
<dbReference type="EMBL" id="X82820">
    <property type="protein sequence ID" value="CAA58029.1"/>
    <property type="molecule type" value="Genomic_DNA"/>
</dbReference>
<dbReference type="EMBL" id="X76870">
    <property type="protein sequence ID" value="CAA54197.1"/>
    <property type="molecule type" value="Genomic_DNA"/>
</dbReference>
<dbReference type="PIR" id="S55281">
    <property type="entry name" value="S55281"/>
</dbReference>
<dbReference type="SMR" id="P42479"/>
<dbReference type="GO" id="GO:0005829">
    <property type="term" value="C:cytosol"/>
    <property type="evidence" value="ECO:0007669"/>
    <property type="project" value="TreeGrafter"/>
</dbReference>
<dbReference type="GO" id="GO:0005525">
    <property type="term" value="F:GTP binding"/>
    <property type="evidence" value="ECO:0007669"/>
    <property type="project" value="UniProtKB-UniRule"/>
</dbReference>
<dbReference type="GO" id="GO:0003924">
    <property type="term" value="F:GTPase activity"/>
    <property type="evidence" value="ECO:0007669"/>
    <property type="project" value="InterPro"/>
</dbReference>
<dbReference type="GO" id="GO:0003746">
    <property type="term" value="F:translation elongation factor activity"/>
    <property type="evidence" value="ECO:0007669"/>
    <property type="project" value="UniProtKB-UniRule"/>
</dbReference>
<dbReference type="CDD" id="cd01884">
    <property type="entry name" value="EF_Tu"/>
    <property type="match status" value="1"/>
</dbReference>
<dbReference type="CDD" id="cd03697">
    <property type="entry name" value="EFTU_II"/>
    <property type="match status" value="1"/>
</dbReference>
<dbReference type="CDD" id="cd03707">
    <property type="entry name" value="EFTU_III"/>
    <property type="match status" value="1"/>
</dbReference>
<dbReference type="FunFam" id="2.40.30.10:FF:000001">
    <property type="entry name" value="Elongation factor Tu"/>
    <property type="match status" value="1"/>
</dbReference>
<dbReference type="FunFam" id="3.40.50.300:FF:000003">
    <property type="entry name" value="Elongation factor Tu"/>
    <property type="match status" value="1"/>
</dbReference>
<dbReference type="Gene3D" id="3.40.50.300">
    <property type="entry name" value="P-loop containing nucleotide triphosphate hydrolases"/>
    <property type="match status" value="1"/>
</dbReference>
<dbReference type="Gene3D" id="2.40.30.10">
    <property type="entry name" value="Translation factors"/>
    <property type="match status" value="2"/>
</dbReference>
<dbReference type="HAMAP" id="MF_00118_B">
    <property type="entry name" value="EF_Tu_B"/>
    <property type="match status" value="1"/>
</dbReference>
<dbReference type="InterPro" id="IPR041709">
    <property type="entry name" value="EF-Tu_GTP-bd"/>
</dbReference>
<dbReference type="InterPro" id="IPR050055">
    <property type="entry name" value="EF-Tu_GTPase"/>
</dbReference>
<dbReference type="InterPro" id="IPR004161">
    <property type="entry name" value="EFTu-like_2"/>
</dbReference>
<dbReference type="InterPro" id="IPR033720">
    <property type="entry name" value="EFTU_2"/>
</dbReference>
<dbReference type="InterPro" id="IPR031157">
    <property type="entry name" value="G_TR_CS"/>
</dbReference>
<dbReference type="InterPro" id="IPR027417">
    <property type="entry name" value="P-loop_NTPase"/>
</dbReference>
<dbReference type="InterPro" id="IPR005225">
    <property type="entry name" value="Small_GTP-bd"/>
</dbReference>
<dbReference type="InterPro" id="IPR000795">
    <property type="entry name" value="T_Tr_GTP-bd_dom"/>
</dbReference>
<dbReference type="InterPro" id="IPR009000">
    <property type="entry name" value="Transl_B-barrel_sf"/>
</dbReference>
<dbReference type="InterPro" id="IPR009001">
    <property type="entry name" value="Transl_elong_EF1A/Init_IF2_C"/>
</dbReference>
<dbReference type="InterPro" id="IPR004541">
    <property type="entry name" value="Transl_elong_EFTu/EF1A_bac/org"/>
</dbReference>
<dbReference type="InterPro" id="IPR004160">
    <property type="entry name" value="Transl_elong_EFTu/EF1A_C"/>
</dbReference>
<dbReference type="NCBIfam" id="TIGR00485">
    <property type="entry name" value="EF-Tu"/>
    <property type="match status" value="1"/>
</dbReference>
<dbReference type="NCBIfam" id="NF000766">
    <property type="entry name" value="PRK00049.1"/>
    <property type="match status" value="1"/>
</dbReference>
<dbReference type="NCBIfam" id="NF009372">
    <property type="entry name" value="PRK12735.1"/>
    <property type="match status" value="1"/>
</dbReference>
<dbReference type="NCBIfam" id="NF009373">
    <property type="entry name" value="PRK12736.1"/>
    <property type="match status" value="1"/>
</dbReference>
<dbReference type="NCBIfam" id="TIGR00231">
    <property type="entry name" value="small_GTP"/>
    <property type="match status" value="1"/>
</dbReference>
<dbReference type="PANTHER" id="PTHR43721:SF22">
    <property type="entry name" value="ELONGATION FACTOR TU, MITOCHONDRIAL"/>
    <property type="match status" value="1"/>
</dbReference>
<dbReference type="PANTHER" id="PTHR43721">
    <property type="entry name" value="ELONGATION FACTOR TU-RELATED"/>
    <property type="match status" value="1"/>
</dbReference>
<dbReference type="Pfam" id="PF00009">
    <property type="entry name" value="GTP_EFTU"/>
    <property type="match status" value="1"/>
</dbReference>
<dbReference type="Pfam" id="PF03144">
    <property type="entry name" value="GTP_EFTU_D2"/>
    <property type="match status" value="1"/>
</dbReference>
<dbReference type="Pfam" id="PF03143">
    <property type="entry name" value="GTP_EFTU_D3"/>
    <property type="match status" value="1"/>
</dbReference>
<dbReference type="PRINTS" id="PR00315">
    <property type="entry name" value="ELONGATNFCT"/>
</dbReference>
<dbReference type="SUPFAM" id="SSF50465">
    <property type="entry name" value="EF-Tu/eEF-1alpha/eIF2-gamma C-terminal domain"/>
    <property type="match status" value="1"/>
</dbReference>
<dbReference type="SUPFAM" id="SSF52540">
    <property type="entry name" value="P-loop containing nucleoside triphosphate hydrolases"/>
    <property type="match status" value="1"/>
</dbReference>
<dbReference type="SUPFAM" id="SSF50447">
    <property type="entry name" value="Translation proteins"/>
    <property type="match status" value="1"/>
</dbReference>
<dbReference type="PROSITE" id="PS00301">
    <property type="entry name" value="G_TR_1"/>
    <property type="match status" value="1"/>
</dbReference>
<dbReference type="PROSITE" id="PS51722">
    <property type="entry name" value="G_TR_2"/>
    <property type="match status" value="1"/>
</dbReference>
<evidence type="ECO:0000250" key="1"/>
<evidence type="ECO:0000255" key="2">
    <source>
        <dbReference type="HAMAP-Rule" id="MF_00118"/>
    </source>
</evidence>
<evidence type="ECO:0000305" key="3"/>
<feature type="chain" id="PRO_0000091398" description="Elongation factor Tu">
    <location>
        <begin position="1"/>
        <end position="396"/>
    </location>
</feature>
<feature type="domain" description="tr-type G">
    <location>
        <begin position="10"/>
        <end position="206"/>
    </location>
</feature>
<feature type="region of interest" description="G1" evidence="1">
    <location>
        <begin position="19"/>
        <end position="26"/>
    </location>
</feature>
<feature type="region of interest" description="G2" evidence="1">
    <location>
        <begin position="60"/>
        <end position="64"/>
    </location>
</feature>
<feature type="region of interest" description="G3" evidence="1">
    <location>
        <begin position="81"/>
        <end position="84"/>
    </location>
</feature>
<feature type="region of interest" description="G4" evidence="1">
    <location>
        <begin position="136"/>
        <end position="139"/>
    </location>
</feature>
<feature type="region of interest" description="G5" evidence="1">
    <location>
        <begin position="174"/>
        <end position="176"/>
    </location>
</feature>
<feature type="binding site" evidence="2">
    <location>
        <begin position="19"/>
        <end position="26"/>
    </location>
    <ligand>
        <name>GTP</name>
        <dbReference type="ChEBI" id="CHEBI:37565"/>
    </ligand>
</feature>
<feature type="binding site" evidence="2">
    <location>
        <position position="26"/>
    </location>
    <ligand>
        <name>Mg(2+)</name>
        <dbReference type="ChEBI" id="CHEBI:18420"/>
    </ligand>
</feature>
<feature type="binding site" evidence="2">
    <location>
        <begin position="81"/>
        <end position="85"/>
    </location>
    <ligand>
        <name>GTP</name>
        <dbReference type="ChEBI" id="CHEBI:37565"/>
    </ligand>
</feature>
<feature type="binding site" evidence="2">
    <location>
        <begin position="136"/>
        <end position="139"/>
    </location>
    <ligand>
        <name>GTP</name>
        <dbReference type="ChEBI" id="CHEBI:37565"/>
    </ligand>
</feature>
<feature type="sequence conflict" description="In Ref. 2; CAA54197." evidence="3" ref="2">
    <original>R</original>
    <variation>P</variation>
    <location>
        <position position="286"/>
    </location>
</feature>
<feature type="sequence conflict" description="In Ref. 2; CAA54197." evidence="3" ref="2">
    <original>NW</original>
    <variation>KP</variation>
    <location>
        <begin position="297"/>
        <end position="298"/>
    </location>
</feature>
<feature type="sequence conflict" description="In Ref. 2; CAA54197." evidence="3" ref="2">
    <original>E</original>
    <variation>D</variation>
    <location>
        <position position="372"/>
    </location>
</feature>
<feature type="sequence conflict" description="In Ref. 2; CAA54197." evidence="3" ref="2">
    <original>P</original>
    <variation>R</variation>
    <location>
        <position position="376"/>
    </location>
</feature>
<feature type="sequence conflict" description="In Ref. 2; CAA54197." evidence="3" ref="2">
    <original>V</original>
    <variation>L</variation>
    <location>
        <position position="390"/>
    </location>
</feature>
<protein>
    <recommendedName>
        <fullName evidence="2">Elongation factor Tu</fullName>
        <shortName evidence="2">EF-Tu</shortName>
        <ecNumber evidence="2">3.6.5.3</ecNumber>
    </recommendedName>
</protein>
<reference key="1">
    <citation type="journal article" date="1995" name="Nucleic Acids Res.">
        <title>Genetic and molecular analysis of the tRNA-tufB operon of the myxobacterium Stigmatella aurantiaca.</title>
        <authorList>
            <person name="Bremaud L."/>
            <person name="Fremaux C."/>
            <person name="Laalami S."/>
            <person name="Cenatiempo Y."/>
        </authorList>
    </citation>
    <scope>NUCLEOTIDE SEQUENCE [GENOMIC DNA]</scope>
    <source>
        <strain>DW4</strain>
    </source>
</reference>
<reference key="2">
    <citation type="journal article" date="1993" name="Antonie Van Leeuwenhoek">
        <title>Phylogenetic relationships of Bacteria based on comparative sequence analysis of elongation factor Tu and ATP-synthase beta-subunit genes.</title>
        <authorList>
            <person name="Ludwig W."/>
            <person name="Neumaier J."/>
            <person name="Klugbauer N."/>
            <person name="Brockmann E."/>
            <person name="Roller C."/>
            <person name="Klugbauer S."/>
            <person name="Reetz K."/>
            <person name="Schachtner I."/>
            <person name="Ludvigsen A."/>
            <person name="Bachleitner M."/>
            <person name="Fischer U."/>
            <person name="Schleifer K.H."/>
        </authorList>
    </citation>
    <scope>NUCLEOTIDE SEQUENCE [GENOMIC DNA] OF 18-396</scope>
    <source>
        <strain>SGA1</strain>
    </source>
</reference>
<accession>P42479</accession>
<accession>Q53775</accession>